<sequence length="2252" mass="249867">MMDSTIILPYAKYNYSLNKYLFYNSNLDIDLDSFNFYKKYNNTLSLLKRKFLDLFCIPVSSSSPPAIQKNGLLSASNPKHLFAFANFVLDCGVNPFLQIWEETLANWPLFQGQSLLACCRTTAEVRREAAEASAEILRLKQVEREHAFQAEVKSLIAAGALPACAEGLARKIWSAGKDQRKVRVAIRTKLTKANALGAAHRSAVATAQAKAEVLREFEPSPAHIQIAVKAHIFAEKLSRKYADLTAQVRARRAAARDLRAKEIYLEIVDLLGAPLLSIPQQIKIKGKYLRRSVAAEVEVPHTRNPMAELVPYKGLGAVSADPRCWVVAQCGKFSATHANLCSEIYSMVIGPWVQLTDFSSIRQFVMNISFLKDFYPEDALIASLKEVNTEAQLAVAAIVTQEEVSKMEANARSANCRANIFKRIASRITSAACSVKNAFLDGCELTGKRLSEGVFSVVIGHFREALTTIKFELGVAMELVEVLIARVKSWFDTLLAKIDHALASLGKWACYALGILLGIGLCNLIETIIGGHGMLVSLFCTGVFATMAIKCAGGWDAAQREMVAMITTLAQSIFGRRKGLDSTDLNTRSIPLLTNVITAMTTFGTGLCKFQSSSIIEIGKLAGACHQMRMGKEALKEFAAMIMHYLGRIADKITGRETIFFDELSTLVSVDVRGWIRCAQGAILESYHTDPGCETFQDVIGRLVQEGQKLQVGVNGIPRKISADYASLIGQIMKDLLELQKRMMRCGTVTGRRKEPVWIYLWGPSHCGKSNFMDVLGMALCKHFDLPYTVCGRNVKDSFFSGYMGQTIMEIDDLSSIKTDPPMEGELINLVSCKDYPLNMADVADKPIYFKSQFVISSSNQEDVPAGAGVRDISSYRSRKAALIEVRRKPGVIFDPDNAMAASQARFKDPMTHMLLNGQNDENSWMEMDDVITECINISARHRAAQEKLQNASLRAKASLDPVTLASQEFLRKEVNSVYLEIPTLEIEKAGISGVRGGRCLYADGILYTLGTEFQLIPHPVENEGYQKLWAQRMKNMYLPAVTTGRYLNASSMIVTGFLRSLVNGDCAVLSVDALSTTATFTQKRIFESLNLAERVYLRALQCQIDAYTLDIPENPYSNVCWVKMLKALGQGREFIVSNGGGILMIAAAIILVLVCGWGFWKAFVGLFTGSMSLGAALAGCQEAEVKAHSVYSADGGDRGYRSRNIPINHRYSYARSQAGNGLLPASRLCVAIYGPRGVFISGMQYKNKCVMMTRHQAQSLNEGDELSVVFASTGESMMIRFHAYHIRENVGSEVVCWLAPSLPQLPCDLKGLFLEDAEVELPSNFKSMGYVLRQDSNAFHYDTLDTYAAVDKTPLVLKGVNGDDLYIHEIPEKIVFHYESRNNDCGMLLTCQLSGKMKVVGMLVAGKDKTSWACILPNPHLAELKSQIEYIPEFGEAEEGYFKVGHVSPKEAPTMPKKTNSVQVPQALRVPCDLPIKEPSIISKNDPRCPANVDPPKAAMKKKFQQPMLDLDQKCLDEIAGDMLETWYDCEDSILSDIPLATAINGIPAGCEDAELENFVMKTSPGYPYFKNKGLGKGKHPYFEECEDGSLKLKEGSQAAELYENMAQFAKEEVPELVVIECPKDELLPARKIKVGPCRLFEIMPLHYNLLLRVKTCAFTAFLQHNRHRLPCQVGTNPYSREWGHLLNRLRRVKTNEAINCDYSGFDGLLTPQLVEMMAKMINRLYLRSGESEVMQAQRLNMIMALCGRYALVGTQVYKVNCGLPSGFALTVVMNSIFNEILIRYAYKTLAPTPEKNSFGINVCLLVYGDDNLISVSPAVASWFTGEAIRVTLAEKRIKITDGSDKDAPTIEAKPFSELDFLKRKFYVHPEHGQVWAPLDKSAIFSCLHWLTPQKSKFALQEKACDYLGEVDVVEELIINVNVSLVELYLHNDKEEFNRVRSFYIARLPMQVDQFRTWAFCEAFHSAQQTGMLRHDPAKILDSLAGPEFPRFMRCSGEGDKAHFYTPILGVCGPHYKPKEQDFLVSTLPIKQGEGVHIPIKIGGGVGGLPTHQWVKNFGRPSQLKNNDGYACYKLLCEQIEQGKRLVFMSAAPYVAGNAALISFGSSRKILKEQMPLCHYRNSIPESVDGLTGYFDAPLPAATIGKSYFANGETYAALCEFKNGEVLDIVGPTNVQILNGAVRQGKVPCLAAHSVGTKFKVSLVCNKTMCPHHHHTGPTFEQAFRTCWLSKCKTKETQVSPWFGTKFLGIS</sequence>
<evidence type="ECO:0000250" key="1"/>
<evidence type="ECO:0000255" key="2"/>
<evidence type="ECO:0000255" key="3">
    <source>
        <dbReference type="PROSITE-ProRule" id="PRU00539"/>
    </source>
</evidence>
<evidence type="ECO:0000255" key="4">
    <source>
        <dbReference type="PROSITE-ProRule" id="PRU00551"/>
    </source>
</evidence>
<evidence type="ECO:0000255" key="5">
    <source>
        <dbReference type="PROSITE-ProRule" id="PRU01222"/>
    </source>
</evidence>
<evidence type="ECO:0000305" key="6"/>
<dbReference type="EC" id="3.6.4.-"/>
<dbReference type="EC" id="3.4.22.-"/>
<dbReference type="EC" id="2.7.7.48"/>
<dbReference type="EMBL" id="X15346">
    <property type="protein sequence ID" value="CAA33405.1"/>
    <property type="molecule type" value="Genomic_RNA"/>
</dbReference>
<dbReference type="PIR" id="S06188">
    <property type="entry name" value="S06188"/>
</dbReference>
<dbReference type="RefSeq" id="NP_619705.1">
    <property type="nucleotide sequence ID" value="NC_003622.1"/>
</dbReference>
<dbReference type="SMR" id="P13025"/>
<dbReference type="MEROPS" id="C03.025"/>
<dbReference type="GeneID" id="956641"/>
<dbReference type="KEGG" id="vg:956641"/>
<dbReference type="Proteomes" id="UP000008624">
    <property type="component" value="Genome"/>
</dbReference>
<dbReference type="GO" id="GO:0044166">
    <property type="term" value="C:host cell endoplasmic reticulum lumen"/>
    <property type="evidence" value="ECO:0007669"/>
    <property type="project" value="UniProtKB-SubCell"/>
</dbReference>
<dbReference type="GO" id="GO:0044167">
    <property type="term" value="C:host cell endoplasmic reticulum membrane"/>
    <property type="evidence" value="ECO:0007669"/>
    <property type="project" value="UniProtKB-SubCell"/>
</dbReference>
<dbReference type="GO" id="GO:0016020">
    <property type="term" value="C:membrane"/>
    <property type="evidence" value="ECO:0007669"/>
    <property type="project" value="UniProtKB-KW"/>
</dbReference>
<dbReference type="GO" id="GO:0005524">
    <property type="term" value="F:ATP binding"/>
    <property type="evidence" value="ECO:0007669"/>
    <property type="project" value="UniProtKB-KW"/>
</dbReference>
<dbReference type="GO" id="GO:0004197">
    <property type="term" value="F:cysteine-type endopeptidase activity"/>
    <property type="evidence" value="ECO:0007669"/>
    <property type="project" value="InterPro"/>
</dbReference>
<dbReference type="GO" id="GO:0003723">
    <property type="term" value="F:RNA binding"/>
    <property type="evidence" value="ECO:0007669"/>
    <property type="project" value="UniProtKB-KW"/>
</dbReference>
<dbReference type="GO" id="GO:0003724">
    <property type="term" value="F:RNA helicase activity"/>
    <property type="evidence" value="ECO:0007669"/>
    <property type="project" value="InterPro"/>
</dbReference>
<dbReference type="GO" id="GO:0003968">
    <property type="term" value="F:RNA-directed RNA polymerase activity"/>
    <property type="evidence" value="ECO:0007669"/>
    <property type="project" value="UniProtKB-KW"/>
</dbReference>
<dbReference type="GO" id="GO:0006351">
    <property type="term" value="P:DNA-templated transcription"/>
    <property type="evidence" value="ECO:0007669"/>
    <property type="project" value="InterPro"/>
</dbReference>
<dbReference type="GO" id="GO:0006508">
    <property type="term" value="P:proteolysis"/>
    <property type="evidence" value="ECO:0007669"/>
    <property type="project" value="UniProtKB-KW"/>
</dbReference>
<dbReference type="GO" id="GO:0039694">
    <property type="term" value="P:viral RNA genome replication"/>
    <property type="evidence" value="ECO:0007669"/>
    <property type="project" value="InterPro"/>
</dbReference>
<dbReference type="Gene3D" id="3.30.70.270">
    <property type="match status" value="1"/>
</dbReference>
<dbReference type="InterPro" id="IPR043502">
    <property type="entry name" value="DNA/RNA_pol_sf"/>
</dbReference>
<dbReference type="InterPro" id="IPR000605">
    <property type="entry name" value="Helicase_SF3_ssDNA/RNA_vir"/>
</dbReference>
<dbReference type="InterPro" id="IPR014759">
    <property type="entry name" value="Helicase_SF3_ssRNA_vir"/>
</dbReference>
<dbReference type="InterPro" id="IPR044067">
    <property type="entry name" value="PCV_3C_PRO"/>
</dbReference>
<dbReference type="InterPro" id="IPR043128">
    <property type="entry name" value="Rev_trsase/Diguanyl_cyclase"/>
</dbReference>
<dbReference type="InterPro" id="IPR001205">
    <property type="entry name" value="RNA-dir_pol_C"/>
</dbReference>
<dbReference type="InterPro" id="IPR007094">
    <property type="entry name" value="RNA-dir_pol_PSvirus"/>
</dbReference>
<dbReference type="Pfam" id="PF00680">
    <property type="entry name" value="RdRP_1"/>
    <property type="match status" value="1"/>
</dbReference>
<dbReference type="Pfam" id="PF00910">
    <property type="entry name" value="RNA_helicase"/>
    <property type="match status" value="1"/>
</dbReference>
<dbReference type="SUPFAM" id="SSF56672">
    <property type="entry name" value="DNA/RNA polymerases"/>
    <property type="match status" value="1"/>
</dbReference>
<dbReference type="PROSITE" id="PS51874">
    <property type="entry name" value="PCV_3C_PRO"/>
    <property type="match status" value="1"/>
</dbReference>
<dbReference type="PROSITE" id="PS50507">
    <property type="entry name" value="RDRP_SSRNA_POS"/>
    <property type="match status" value="1"/>
</dbReference>
<dbReference type="PROSITE" id="PS51218">
    <property type="entry name" value="SF3_HELICASE_2"/>
    <property type="match status" value="1"/>
</dbReference>
<protein>
    <recommendedName>
        <fullName>RNA1 polyprotein</fullName>
    </recommendedName>
    <alternativeName>
        <fullName>P1</fullName>
    </alternativeName>
    <component>
        <recommendedName>
            <fullName>P1A protein</fullName>
            <shortName>1A</shortName>
        </recommendedName>
        <alternativeName>
            <fullName>Protease cofactor</fullName>
        </alternativeName>
    </component>
    <component>
        <recommendedName>
            <fullName>Putative ATP-dependent helicase</fullName>
            <ecNumber>3.6.4.-</ecNumber>
        </recommendedName>
        <alternativeName>
            <fullName>1B</fullName>
        </alternativeName>
        <alternativeName>
            <fullName>Membrane-binding protein</fullName>
        </alternativeName>
        <alternativeName>
            <fullName>NTP-binding protein</fullName>
            <shortName>NTB</shortName>
        </alternativeName>
    </component>
    <component>
        <recommendedName>
            <fullName>Viral genome-linked protein</fullName>
        </recommendedName>
        <alternativeName>
            <fullName>1C-VPg</fullName>
        </alternativeName>
    </component>
    <component>
        <recommendedName>
            <fullName>Picornain 3C-like protease</fullName>
            <shortName>3C-like protease</shortName>
            <ecNumber>3.4.22.-</ecNumber>
        </recommendedName>
        <alternativeName>
            <fullName>1D-PRO</fullName>
        </alternativeName>
    </component>
    <component>
        <recommendedName>
            <fullName>RNA-directed RNA polymerase</fullName>
            <ecNumber>2.7.7.48</ecNumber>
        </recommendedName>
        <alternativeName>
            <fullName>1E-POL</fullName>
        </alternativeName>
    </component>
</protein>
<name>POL1_GCMV</name>
<organismHost>
    <name type="scientific">Apium graveolens</name>
    <name type="common">Celery</name>
    <dbReference type="NCBI Taxonomy" id="4045"/>
</organismHost>
<organismHost>
    <name type="scientific">Vitis vinifera</name>
    <name type="common">Grape</name>
    <dbReference type="NCBI Taxonomy" id="29760"/>
</organismHost>
<accession>P13025</accession>
<reference key="1">
    <citation type="journal article" date="1989" name="Nucleic Acids Res.">
        <title>Nucleotide sequence of Hungarian grapevine chrome mosaic nepovirus RNA1.</title>
        <authorList>
            <person name="le Gall O."/>
            <person name="Candresse T."/>
            <person name="Brault V."/>
            <person name="Dunez J."/>
        </authorList>
    </citation>
    <scope>NUCLEOTIDE SEQUENCE [GENOMIC RNA]</scope>
</reference>
<keyword id="KW-0067">ATP-binding</keyword>
<keyword id="KW-0191">Covalent protein-RNA linkage</keyword>
<keyword id="KW-0347">Helicase</keyword>
<keyword id="KW-1038">Host endoplasmic reticulum</keyword>
<keyword id="KW-1043">Host membrane</keyword>
<keyword id="KW-0378">Hydrolase</keyword>
<keyword id="KW-0472">Membrane</keyword>
<keyword id="KW-0547">Nucleotide-binding</keyword>
<keyword id="KW-0548">Nucleotidyltransferase</keyword>
<keyword id="KW-0645">Protease</keyword>
<keyword id="KW-0694">RNA-binding</keyword>
<keyword id="KW-0696">RNA-directed RNA polymerase</keyword>
<keyword id="KW-0788">Thiol protease</keyword>
<keyword id="KW-0808">Transferase</keyword>
<keyword id="KW-0812">Transmembrane</keyword>
<keyword id="KW-1133">Transmembrane helix</keyword>
<keyword id="KW-0693">Viral RNA replication</keyword>
<proteinExistence type="inferred from homology"/>
<organism>
    <name type="scientific">Grapevine chrome mosaic virus</name>
    <name type="common">GCMV</name>
    <name type="synonym">Hungarian grapevine chrome mosaic virus</name>
    <dbReference type="NCBI Taxonomy" id="12273"/>
    <lineage>
        <taxon>Viruses</taxon>
        <taxon>Riboviria</taxon>
        <taxon>Orthornavirae</taxon>
        <taxon>Pisuviricota</taxon>
        <taxon>Pisoniviricetes</taxon>
        <taxon>Picornavirales</taxon>
        <taxon>Secoviridae</taxon>
        <taxon>Comovirinae</taxon>
        <taxon>Nepovirus</taxon>
        <taxon>Nepovirus chromusivum</taxon>
    </lineage>
</organism>
<comment type="function">
    <text evidence="1">Picornain 3C-like protease is a thiol protease that cleaves the P1 and P2 polyproteins.</text>
</comment>
<comment type="catalytic activity">
    <reaction evidence="3">
        <text>RNA(n) + a ribonucleoside 5'-triphosphate = RNA(n+1) + diphosphate</text>
        <dbReference type="Rhea" id="RHEA:21248"/>
        <dbReference type="Rhea" id="RHEA-COMP:14527"/>
        <dbReference type="Rhea" id="RHEA-COMP:17342"/>
        <dbReference type="ChEBI" id="CHEBI:33019"/>
        <dbReference type="ChEBI" id="CHEBI:61557"/>
        <dbReference type="ChEBI" id="CHEBI:140395"/>
        <dbReference type="EC" id="2.7.7.48"/>
    </reaction>
</comment>
<comment type="subcellular location">
    <molecule>Viral genome-linked protein</molecule>
    <subcellularLocation>
        <location evidence="1">Host endoplasmic reticulum lumen</location>
    </subcellularLocation>
</comment>
<comment type="subcellular location">
    <molecule>Putative ATP-dependent helicase</molecule>
    <subcellularLocation>
        <location evidence="1">Host endoplasmic reticulum membrane</location>
        <topology evidence="1">Single-pass membrane protein</topology>
    </subcellularLocation>
</comment>
<comment type="PTM">
    <text evidence="1">Specific enzymatic cleavages by picornain 3C-like protease in vivo yield mature proteins. Picornain 3C-like protease is autocatalytically processed (By similarity).</text>
</comment>
<comment type="PTM">
    <text evidence="1">VPg is uridylylated by the polymerase and is covalently linked to the 5'-end of genomic RNA. This uridylylated form acts as a nucleotide-peptide primer for the polymerase (By similarity).</text>
</comment>
<comment type="similarity">
    <text evidence="6">Belongs to the nepoviruses RNA1 polyprotein family.</text>
</comment>
<feature type="chain" id="PRO_0000037070" description="P1A protein" evidence="2">
    <location>
        <begin position="1"/>
        <end position="564"/>
    </location>
</feature>
<feature type="chain" id="PRO_0000037071" description="Putative ATP-dependent helicase" evidence="2">
    <location>
        <begin position="565"/>
        <end position="1187"/>
    </location>
</feature>
<feature type="chain" id="PRO_0000037072" description="Viral genome-linked protein" evidence="1">
    <location>
        <begin position="1188"/>
        <end position="1216"/>
    </location>
</feature>
<feature type="chain" id="PRO_0000037073" description="Picornain 3C-like protease" evidence="2">
    <location>
        <begin position="1217"/>
        <end position="1426"/>
    </location>
</feature>
<feature type="chain" id="PRO_0000037074" description="RNA-directed RNA polymerase" evidence="2">
    <location>
        <begin position="1427"/>
        <end position="2252"/>
    </location>
</feature>
<feature type="topological domain" description="Cytoplasmic" evidence="2">
    <location>
        <begin position="565"/>
        <end position="1140"/>
    </location>
</feature>
<feature type="transmembrane region" description="Helical" evidence="2">
    <location>
        <begin position="1141"/>
        <end position="1161"/>
    </location>
</feature>
<feature type="topological domain" description="Lumenal" evidence="2">
    <location>
        <begin position="1162"/>
        <end position="1187"/>
    </location>
</feature>
<feature type="domain" description="SF3 helicase" evidence="4">
    <location>
        <begin position="733"/>
        <end position="899"/>
    </location>
</feature>
<feature type="domain" description="Peptidase C3" evidence="5">
    <location>
        <begin position="1213"/>
        <end position="1422"/>
    </location>
</feature>
<feature type="domain" description="RdRp catalytic" evidence="3">
    <location>
        <begin position="1697"/>
        <end position="1825"/>
    </location>
</feature>
<feature type="active site" description="For picornain 3C-like protease activity" evidence="5">
    <location>
        <position position="1256"/>
    </location>
</feature>
<feature type="active site" description="For picornain 3C-like protease activity" evidence="5">
    <location>
        <position position="1294"/>
    </location>
</feature>
<feature type="active site" description="For picornain 3C-like protease activity" evidence="5">
    <location>
        <position position="1386"/>
    </location>
</feature>
<feature type="binding site" evidence="4">
    <location>
        <begin position="763"/>
        <end position="770"/>
    </location>
    <ligand>
        <name>ATP</name>
        <dbReference type="ChEBI" id="CHEBI:30616"/>
    </ligand>
</feature>